<accession>Q9UTE5</accession>
<keyword id="KW-0067">ATP-binding</keyword>
<keyword id="KW-0418">Kinase</keyword>
<keyword id="KW-0547">Nucleotide-binding</keyword>
<keyword id="KW-0597">Phosphoprotein</keyword>
<keyword id="KW-0652">Protein synthesis inhibitor</keyword>
<keyword id="KW-1185">Reference proteome</keyword>
<keyword id="KW-0723">Serine/threonine-protein kinase</keyword>
<keyword id="KW-0808">Transferase</keyword>
<gene>
    <name type="primary">hri2</name>
    <name type="ORF">SPAC222.07c</name>
</gene>
<dbReference type="EC" id="2.7.11.1"/>
<dbReference type="EMBL" id="AF536224">
    <property type="protein sequence ID" value="AAN04054.1"/>
    <property type="molecule type" value="mRNA"/>
</dbReference>
<dbReference type="EMBL" id="CU329670">
    <property type="protein sequence ID" value="CAB60699.1"/>
    <property type="molecule type" value="Genomic_DNA"/>
</dbReference>
<dbReference type="PIR" id="T50148">
    <property type="entry name" value="T50148"/>
</dbReference>
<dbReference type="RefSeq" id="NP_593146.1">
    <property type="nucleotide sequence ID" value="NM_001018543.2"/>
</dbReference>
<dbReference type="SMR" id="Q9UTE5"/>
<dbReference type="BioGRID" id="278430">
    <property type="interactions" value="25"/>
</dbReference>
<dbReference type="FunCoup" id="Q9UTE5">
    <property type="interactions" value="91"/>
</dbReference>
<dbReference type="STRING" id="284812.Q9UTE5"/>
<dbReference type="iPTMnet" id="Q9UTE5"/>
<dbReference type="PaxDb" id="4896-SPAC222.07c.1"/>
<dbReference type="EnsemblFungi" id="SPAC222.07c.1">
    <property type="protein sequence ID" value="SPAC222.07c.1:pep"/>
    <property type="gene ID" value="SPAC222.07c"/>
</dbReference>
<dbReference type="GeneID" id="2541943"/>
<dbReference type="KEGG" id="spo:2541943"/>
<dbReference type="PomBase" id="SPAC222.07c">
    <property type="gene designation" value="hri2"/>
</dbReference>
<dbReference type="VEuPathDB" id="FungiDB:SPAC222.07c"/>
<dbReference type="eggNOG" id="KOG1035">
    <property type="taxonomic scope" value="Eukaryota"/>
</dbReference>
<dbReference type="HOGENOM" id="CLU_000288_134_1_1"/>
<dbReference type="InParanoid" id="Q9UTE5"/>
<dbReference type="OMA" id="RECMWEE"/>
<dbReference type="PhylomeDB" id="Q9UTE5"/>
<dbReference type="PRO" id="PR:Q9UTE5"/>
<dbReference type="Proteomes" id="UP000002485">
    <property type="component" value="Chromosome I"/>
</dbReference>
<dbReference type="GO" id="GO:0005737">
    <property type="term" value="C:cytoplasm"/>
    <property type="evidence" value="ECO:0000318"/>
    <property type="project" value="GO_Central"/>
</dbReference>
<dbReference type="GO" id="GO:0005829">
    <property type="term" value="C:cytosol"/>
    <property type="evidence" value="ECO:0007005"/>
    <property type="project" value="PomBase"/>
</dbReference>
<dbReference type="GO" id="GO:0005634">
    <property type="term" value="C:nucleus"/>
    <property type="evidence" value="ECO:0000318"/>
    <property type="project" value="GO_Central"/>
</dbReference>
<dbReference type="GO" id="GO:0005524">
    <property type="term" value="F:ATP binding"/>
    <property type="evidence" value="ECO:0000255"/>
    <property type="project" value="PomBase"/>
</dbReference>
<dbReference type="GO" id="GO:0004694">
    <property type="term" value="F:eukaryotic translation initiation factor 2alpha kinase activity"/>
    <property type="evidence" value="ECO:0000314"/>
    <property type="project" value="PomBase"/>
</dbReference>
<dbReference type="GO" id="GO:0106310">
    <property type="term" value="F:protein serine kinase activity"/>
    <property type="evidence" value="ECO:0007669"/>
    <property type="project" value="RHEA"/>
</dbReference>
<dbReference type="GO" id="GO:0070314">
    <property type="term" value="P:G1 to G0 transition"/>
    <property type="evidence" value="ECO:0000315"/>
    <property type="project" value="PomBase"/>
</dbReference>
<dbReference type="GO" id="GO:1990625">
    <property type="term" value="P:negative regulation of cytoplasmic translational initiation in response to stress"/>
    <property type="evidence" value="ECO:0000315"/>
    <property type="project" value="PomBase"/>
</dbReference>
<dbReference type="GO" id="GO:0023052">
    <property type="term" value="P:signaling"/>
    <property type="evidence" value="ECO:0000305"/>
    <property type="project" value="PomBase"/>
</dbReference>
<dbReference type="CDD" id="cd13996">
    <property type="entry name" value="STKc_EIF2AK"/>
    <property type="match status" value="1"/>
</dbReference>
<dbReference type="Gene3D" id="3.30.200.20">
    <property type="entry name" value="Phosphorylase Kinase, domain 1"/>
    <property type="match status" value="1"/>
</dbReference>
<dbReference type="Gene3D" id="1.10.510.10">
    <property type="entry name" value="Transferase(Phosphotransferase) domain 1"/>
    <property type="match status" value="1"/>
</dbReference>
<dbReference type="InterPro" id="IPR050339">
    <property type="entry name" value="CC_SR_Kinase"/>
</dbReference>
<dbReference type="InterPro" id="IPR054521">
    <property type="entry name" value="HRI2_3H"/>
</dbReference>
<dbReference type="InterPro" id="IPR011009">
    <property type="entry name" value="Kinase-like_dom_sf"/>
</dbReference>
<dbReference type="InterPro" id="IPR000719">
    <property type="entry name" value="Prot_kinase_dom"/>
</dbReference>
<dbReference type="InterPro" id="IPR017441">
    <property type="entry name" value="Protein_kinase_ATP_BS"/>
</dbReference>
<dbReference type="InterPro" id="IPR008271">
    <property type="entry name" value="Ser/Thr_kinase_AS"/>
</dbReference>
<dbReference type="PANTHER" id="PTHR11042:SF187">
    <property type="entry name" value="EUKARYOTIC TRANSLATION INITIATION FACTOR 2-ALPHA KINASE 2"/>
    <property type="match status" value="1"/>
</dbReference>
<dbReference type="PANTHER" id="PTHR11042">
    <property type="entry name" value="EUKARYOTIC TRANSLATION INITIATION FACTOR 2-ALPHA KINASE EIF2-ALPHA KINASE -RELATED"/>
    <property type="match status" value="1"/>
</dbReference>
<dbReference type="Pfam" id="PF22949">
    <property type="entry name" value="HRI2_3H"/>
    <property type="match status" value="1"/>
</dbReference>
<dbReference type="Pfam" id="PF00069">
    <property type="entry name" value="Pkinase"/>
    <property type="match status" value="2"/>
</dbReference>
<dbReference type="SMART" id="SM00220">
    <property type="entry name" value="S_TKc"/>
    <property type="match status" value="1"/>
</dbReference>
<dbReference type="SUPFAM" id="SSF56112">
    <property type="entry name" value="Protein kinase-like (PK-like)"/>
    <property type="match status" value="1"/>
</dbReference>
<dbReference type="PROSITE" id="PS00107">
    <property type="entry name" value="PROTEIN_KINASE_ATP"/>
    <property type="match status" value="1"/>
</dbReference>
<dbReference type="PROSITE" id="PS50011">
    <property type="entry name" value="PROTEIN_KINASE_DOM"/>
    <property type="match status" value="1"/>
</dbReference>
<dbReference type="PROSITE" id="PS00108">
    <property type="entry name" value="PROTEIN_KINASE_ST"/>
    <property type="match status" value="1"/>
</dbReference>
<sequence>MRFFNAHKSAEDGNYSETTNAISLKNERQSRDLSVNKHGRMLLTALLENFCQLYDNNPAKSKRLFALICHTLQKIGILEEEYIEELAAVRSNYQDALHHLILQAREAIRLDDAEERLLALPDPTNVFEKFPQETALSKFSVDGLNVRQFRFRDLTLESWLQSRNSRYIEDFEEYSLLGRGGFGSVYHVRNKIDGAEYAMKKINSTFQQMSYSKIFREIKCLAKMDHPNVIRYFSSWVESTTEATQMPIVMSKNSSRVLGTSSYCDVNGMDSIIFEPTESSALTDDILFAEDPGTESIISTSRKSSYSSTTESSNFENLESPRNLHDSNVSTFNNTTILDDDYSSSMHISKTGPTHSFIIYIQMQLCFDDLESYLIRRNHFLSFPLCKEQIQLHTDLFRMIINGVMYVHEGVNLIHRDIKPSNIFLAKSLPEDRGSVPLISYNDKNDLKEYITPKIGDFGLVVENKKNTETALSFLERNHLPNLQDETQHIGTATYAAPELLDAMSSQHNKFTKKIDTFSLGMVLFELLHPFQTNMERATKLQDLRRGNLPEEFVEQHICESSLILWMTAKDPTKRPSLLEVLNCGLLLPNQVSMPNISNIVSTNHLDVETQMKLIMDENQRLREQIAVLRSRIQHLETR</sequence>
<reference key="1">
    <citation type="journal article" date="2002" name="Mol. Cell. Biol.">
        <title>Phosphorylation of eukaryotic initiation factor 2 by heme-regulated inhibitor kinase-related protein kinases in Schizosaccharomyces pombe is important for resistance to environmental stresses.</title>
        <authorList>
            <person name="Zhan K."/>
            <person name="Vattem K.M."/>
            <person name="Bauer B.N."/>
            <person name="Dever T.E."/>
            <person name="Chen J.-J."/>
            <person name="Wek R.C."/>
        </authorList>
    </citation>
    <scope>NUCLEOTIDE SEQUENCE [MRNA]</scope>
    <scope>FUNCTION</scope>
    <scope>AUTOPHOSPHORYLATION</scope>
    <source>
        <strain>SP223</strain>
    </source>
</reference>
<reference key="2">
    <citation type="journal article" date="2002" name="Nature">
        <title>The genome sequence of Schizosaccharomyces pombe.</title>
        <authorList>
            <person name="Wood V."/>
            <person name="Gwilliam R."/>
            <person name="Rajandream M.A."/>
            <person name="Lyne M.H."/>
            <person name="Lyne R."/>
            <person name="Stewart A."/>
            <person name="Sgouros J.G."/>
            <person name="Peat N."/>
            <person name="Hayles J."/>
            <person name="Baker S.G."/>
            <person name="Basham D."/>
            <person name="Bowman S."/>
            <person name="Brooks K."/>
            <person name="Brown D."/>
            <person name="Brown S."/>
            <person name="Chillingworth T."/>
            <person name="Churcher C.M."/>
            <person name="Collins M."/>
            <person name="Connor R."/>
            <person name="Cronin A."/>
            <person name="Davis P."/>
            <person name="Feltwell T."/>
            <person name="Fraser A."/>
            <person name="Gentles S."/>
            <person name="Goble A."/>
            <person name="Hamlin N."/>
            <person name="Harris D.E."/>
            <person name="Hidalgo J."/>
            <person name="Hodgson G."/>
            <person name="Holroyd S."/>
            <person name="Hornsby T."/>
            <person name="Howarth S."/>
            <person name="Huckle E.J."/>
            <person name="Hunt S."/>
            <person name="Jagels K."/>
            <person name="James K.D."/>
            <person name="Jones L."/>
            <person name="Jones M."/>
            <person name="Leather S."/>
            <person name="McDonald S."/>
            <person name="McLean J."/>
            <person name="Mooney P."/>
            <person name="Moule S."/>
            <person name="Mungall K.L."/>
            <person name="Murphy L.D."/>
            <person name="Niblett D."/>
            <person name="Odell C."/>
            <person name="Oliver K."/>
            <person name="O'Neil S."/>
            <person name="Pearson D."/>
            <person name="Quail M.A."/>
            <person name="Rabbinowitsch E."/>
            <person name="Rutherford K.M."/>
            <person name="Rutter S."/>
            <person name="Saunders D."/>
            <person name="Seeger K."/>
            <person name="Sharp S."/>
            <person name="Skelton J."/>
            <person name="Simmonds M.N."/>
            <person name="Squares R."/>
            <person name="Squares S."/>
            <person name="Stevens K."/>
            <person name="Taylor K."/>
            <person name="Taylor R.G."/>
            <person name="Tivey A."/>
            <person name="Walsh S.V."/>
            <person name="Warren T."/>
            <person name="Whitehead S."/>
            <person name="Woodward J.R."/>
            <person name="Volckaert G."/>
            <person name="Aert R."/>
            <person name="Robben J."/>
            <person name="Grymonprez B."/>
            <person name="Weltjens I."/>
            <person name="Vanstreels E."/>
            <person name="Rieger M."/>
            <person name="Schaefer M."/>
            <person name="Mueller-Auer S."/>
            <person name="Gabel C."/>
            <person name="Fuchs M."/>
            <person name="Duesterhoeft A."/>
            <person name="Fritzc C."/>
            <person name="Holzer E."/>
            <person name="Moestl D."/>
            <person name="Hilbert H."/>
            <person name="Borzym K."/>
            <person name="Langer I."/>
            <person name="Beck A."/>
            <person name="Lehrach H."/>
            <person name="Reinhardt R."/>
            <person name="Pohl T.M."/>
            <person name="Eger P."/>
            <person name="Zimmermann W."/>
            <person name="Wedler H."/>
            <person name="Wambutt R."/>
            <person name="Purnelle B."/>
            <person name="Goffeau A."/>
            <person name="Cadieu E."/>
            <person name="Dreano S."/>
            <person name="Gloux S."/>
            <person name="Lelaure V."/>
            <person name="Mottier S."/>
            <person name="Galibert F."/>
            <person name="Aves S.J."/>
            <person name="Xiang Z."/>
            <person name="Hunt C."/>
            <person name="Moore K."/>
            <person name="Hurst S.M."/>
            <person name="Lucas M."/>
            <person name="Rochet M."/>
            <person name="Gaillardin C."/>
            <person name="Tallada V.A."/>
            <person name="Garzon A."/>
            <person name="Thode G."/>
            <person name="Daga R.R."/>
            <person name="Cruzado L."/>
            <person name="Jimenez J."/>
            <person name="Sanchez M."/>
            <person name="del Rey F."/>
            <person name="Benito J."/>
            <person name="Dominguez A."/>
            <person name="Revuelta J.L."/>
            <person name="Moreno S."/>
            <person name="Armstrong J."/>
            <person name="Forsburg S.L."/>
            <person name="Cerutti L."/>
            <person name="Lowe T."/>
            <person name="McCombie W.R."/>
            <person name="Paulsen I."/>
            <person name="Potashkin J."/>
            <person name="Shpakovski G.V."/>
            <person name="Ussery D."/>
            <person name="Barrell B.G."/>
            <person name="Nurse P."/>
        </authorList>
    </citation>
    <scope>NUCLEOTIDE SEQUENCE [LARGE SCALE GENOMIC DNA]</scope>
    <source>
        <strain>972 / ATCC 24843</strain>
    </source>
</reference>
<protein>
    <recommendedName>
        <fullName>Eukaryotic translation initiation factor 2-alpha kinase 2</fullName>
        <ecNumber>2.7.11.1</ecNumber>
    </recommendedName>
    <alternativeName>
        <fullName>Heme-regulated eukaryotic initiation factor eIF-2-alpha kinase</fullName>
    </alternativeName>
    <alternativeName>
        <fullName>Heme-regulated inhibitor 2</fullName>
    </alternativeName>
</protein>
<name>E2AK2_SCHPO</name>
<feature type="chain" id="PRO_0000085950" description="Eukaryotic translation initiation factor 2-alpha kinase 2">
    <location>
        <begin position="1"/>
        <end position="639"/>
    </location>
</feature>
<feature type="domain" description="Protein kinase" evidence="1">
    <location>
        <begin position="171"/>
        <end position="588"/>
    </location>
</feature>
<feature type="region of interest" description="Disordered" evidence="3">
    <location>
        <begin position="298"/>
        <end position="322"/>
    </location>
</feature>
<feature type="compositionally biased region" description="Low complexity" evidence="3">
    <location>
        <begin position="298"/>
        <end position="320"/>
    </location>
</feature>
<feature type="active site" description="Proton acceptor" evidence="1 2">
    <location>
        <position position="417"/>
    </location>
</feature>
<feature type="binding site" evidence="1">
    <location>
        <begin position="177"/>
        <end position="185"/>
    </location>
    <ligand>
        <name>ATP</name>
        <dbReference type="ChEBI" id="CHEBI:30616"/>
    </ligand>
</feature>
<feature type="binding site" evidence="1">
    <location>
        <position position="200"/>
    </location>
    <ligand>
        <name>ATP</name>
        <dbReference type="ChEBI" id="CHEBI:30616"/>
    </ligand>
</feature>
<organism>
    <name type="scientific">Schizosaccharomyces pombe (strain 972 / ATCC 24843)</name>
    <name type="common">Fission yeast</name>
    <dbReference type="NCBI Taxonomy" id="284812"/>
    <lineage>
        <taxon>Eukaryota</taxon>
        <taxon>Fungi</taxon>
        <taxon>Dikarya</taxon>
        <taxon>Ascomycota</taxon>
        <taxon>Taphrinomycotina</taxon>
        <taxon>Schizosaccharomycetes</taxon>
        <taxon>Schizosaccharomycetales</taxon>
        <taxon>Schizosaccharomycetaceae</taxon>
        <taxon>Schizosaccharomyces</taxon>
    </lineage>
</organism>
<proteinExistence type="evidence at protein level"/>
<evidence type="ECO:0000255" key="1">
    <source>
        <dbReference type="PROSITE-ProRule" id="PRU00159"/>
    </source>
</evidence>
<evidence type="ECO:0000255" key="2">
    <source>
        <dbReference type="PROSITE-ProRule" id="PRU10027"/>
    </source>
</evidence>
<evidence type="ECO:0000256" key="3">
    <source>
        <dbReference type="SAM" id="MobiDB-lite"/>
    </source>
</evidence>
<evidence type="ECO:0000269" key="4">
    <source>
    </source>
</evidence>
<comment type="function">
    <text evidence="4">Mediates down-regulation of protein synthesis in response to stress conditions by the phosphorylation of the alpha subunit of eIF-2 (tif211) on 'Ser-52'. Protein synthesis is inhibited at the level of initiation. Activity is inhibited in the presence of heme.</text>
</comment>
<comment type="catalytic activity">
    <reaction>
        <text>L-seryl-[protein] + ATP = O-phospho-L-seryl-[protein] + ADP + H(+)</text>
        <dbReference type="Rhea" id="RHEA:17989"/>
        <dbReference type="Rhea" id="RHEA-COMP:9863"/>
        <dbReference type="Rhea" id="RHEA-COMP:11604"/>
        <dbReference type="ChEBI" id="CHEBI:15378"/>
        <dbReference type="ChEBI" id="CHEBI:29999"/>
        <dbReference type="ChEBI" id="CHEBI:30616"/>
        <dbReference type="ChEBI" id="CHEBI:83421"/>
        <dbReference type="ChEBI" id="CHEBI:456216"/>
        <dbReference type="EC" id="2.7.11.1"/>
    </reaction>
</comment>
<comment type="catalytic activity">
    <reaction>
        <text>L-threonyl-[protein] + ATP = O-phospho-L-threonyl-[protein] + ADP + H(+)</text>
        <dbReference type="Rhea" id="RHEA:46608"/>
        <dbReference type="Rhea" id="RHEA-COMP:11060"/>
        <dbReference type="Rhea" id="RHEA-COMP:11605"/>
        <dbReference type="ChEBI" id="CHEBI:15378"/>
        <dbReference type="ChEBI" id="CHEBI:30013"/>
        <dbReference type="ChEBI" id="CHEBI:30616"/>
        <dbReference type="ChEBI" id="CHEBI:61977"/>
        <dbReference type="ChEBI" id="CHEBI:456216"/>
        <dbReference type="EC" id="2.7.11.1"/>
    </reaction>
</comment>
<comment type="PTM">
    <text>Autophosphorylated.</text>
</comment>
<comment type="similarity">
    <text evidence="1">Belongs to the protein kinase superfamily. Ser/Thr protein kinase family. GCN2 subfamily.</text>
</comment>